<gene>
    <name evidence="1" type="primary">argB</name>
    <name type="ordered locus">Msm_0375</name>
</gene>
<reference key="1">
    <citation type="journal article" date="2007" name="Proc. Natl. Acad. Sci. U.S.A.">
        <title>Genomic and metabolic adaptations of Methanobrevibacter smithii to the human gut.</title>
        <authorList>
            <person name="Samuel B.S."/>
            <person name="Hansen E.E."/>
            <person name="Manchester J.K."/>
            <person name="Coutinho P.M."/>
            <person name="Henrissat B."/>
            <person name="Fulton R."/>
            <person name="Latreille P."/>
            <person name="Kim K."/>
            <person name="Wilson R.K."/>
            <person name="Gordon J.I."/>
        </authorList>
    </citation>
    <scope>NUCLEOTIDE SEQUENCE [LARGE SCALE GENOMIC DNA]</scope>
    <source>
        <strain>ATCC 35061 / DSM 861 / OCM 144 / PS</strain>
    </source>
</reference>
<accession>A5UK52</accession>
<feature type="chain" id="PRO_0000335674" description="Acetylglutamate kinase">
    <location>
        <begin position="1"/>
        <end position="292"/>
    </location>
</feature>
<feature type="binding site" evidence="1">
    <location>
        <begin position="60"/>
        <end position="61"/>
    </location>
    <ligand>
        <name>substrate</name>
    </ligand>
</feature>
<feature type="binding site" evidence="1">
    <location>
        <position position="82"/>
    </location>
    <ligand>
        <name>substrate</name>
    </ligand>
</feature>
<feature type="binding site" evidence="1">
    <location>
        <position position="187"/>
    </location>
    <ligand>
        <name>substrate</name>
    </ligand>
</feature>
<feature type="site" description="Transition state stabilizer" evidence="1">
    <location>
        <position position="25"/>
    </location>
</feature>
<feature type="site" description="Transition state stabilizer" evidence="1">
    <location>
        <position position="250"/>
    </location>
</feature>
<proteinExistence type="inferred from homology"/>
<name>ARGB_METS3</name>
<dbReference type="EC" id="2.7.2.8" evidence="1"/>
<dbReference type="EMBL" id="CP000678">
    <property type="protein sequence ID" value="ABQ86580.1"/>
    <property type="molecule type" value="Genomic_DNA"/>
</dbReference>
<dbReference type="RefSeq" id="WP_004032116.1">
    <property type="nucleotide sequence ID" value="NZ_CP117965.1"/>
</dbReference>
<dbReference type="SMR" id="A5UK52"/>
<dbReference type="STRING" id="420247.Msm_0375"/>
<dbReference type="EnsemblBacteria" id="ABQ86580">
    <property type="protein sequence ID" value="ABQ86580"/>
    <property type="gene ID" value="Msm_0375"/>
</dbReference>
<dbReference type="GeneID" id="78817002"/>
<dbReference type="KEGG" id="msi:Msm_0375"/>
<dbReference type="PATRIC" id="fig|420247.28.peg.377"/>
<dbReference type="eggNOG" id="arCOG00862">
    <property type="taxonomic scope" value="Archaea"/>
</dbReference>
<dbReference type="HOGENOM" id="CLU_053680_0_0_2"/>
<dbReference type="UniPathway" id="UPA00068">
    <property type="reaction ID" value="UER00107"/>
</dbReference>
<dbReference type="Proteomes" id="UP000001992">
    <property type="component" value="Chromosome"/>
</dbReference>
<dbReference type="GO" id="GO:0005737">
    <property type="term" value="C:cytoplasm"/>
    <property type="evidence" value="ECO:0007669"/>
    <property type="project" value="UniProtKB-SubCell"/>
</dbReference>
<dbReference type="GO" id="GO:0003991">
    <property type="term" value="F:acetylglutamate kinase activity"/>
    <property type="evidence" value="ECO:0007669"/>
    <property type="project" value="UniProtKB-UniRule"/>
</dbReference>
<dbReference type="GO" id="GO:0005524">
    <property type="term" value="F:ATP binding"/>
    <property type="evidence" value="ECO:0007669"/>
    <property type="project" value="UniProtKB-UniRule"/>
</dbReference>
<dbReference type="GO" id="GO:0042450">
    <property type="term" value="P:arginine biosynthetic process via ornithine"/>
    <property type="evidence" value="ECO:0007669"/>
    <property type="project" value="UniProtKB-UniRule"/>
</dbReference>
<dbReference type="GO" id="GO:0006526">
    <property type="term" value="P:L-arginine biosynthetic process"/>
    <property type="evidence" value="ECO:0007669"/>
    <property type="project" value="UniProtKB-UniPathway"/>
</dbReference>
<dbReference type="CDD" id="cd04250">
    <property type="entry name" value="AAK_NAGK-C"/>
    <property type="match status" value="1"/>
</dbReference>
<dbReference type="FunFam" id="3.40.1160.10:FF:000004">
    <property type="entry name" value="Acetylglutamate kinase"/>
    <property type="match status" value="1"/>
</dbReference>
<dbReference type="Gene3D" id="3.40.1160.10">
    <property type="entry name" value="Acetylglutamate kinase-like"/>
    <property type="match status" value="1"/>
</dbReference>
<dbReference type="HAMAP" id="MF_00082">
    <property type="entry name" value="ArgB"/>
    <property type="match status" value="1"/>
</dbReference>
<dbReference type="InterPro" id="IPR036393">
    <property type="entry name" value="AceGlu_kinase-like_sf"/>
</dbReference>
<dbReference type="InterPro" id="IPR004662">
    <property type="entry name" value="AcgluKinase_fam"/>
</dbReference>
<dbReference type="InterPro" id="IPR037528">
    <property type="entry name" value="ArgB"/>
</dbReference>
<dbReference type="InterPro" id="IPR001048">
    <property type="entry name" value="Asp/Glu/Uridylate_kinase"/>
</dbReference>
<dbReference type="InterPro" id="IPR041727">
    <property type="entry name" value="NAGK-C"/>
</dbReference>
<dbReference type="NCBIfam" id="TIGR00761">
    <property type="entry name" value="argB"/>
    <property type="match status" value="1"/>
</dbReference>
<dbReference type="PANTHER" id="PTHR23342">
    <property type="entry name" value="N-ACETYLGLUTAMATE SYNTHASE"/>
    <property type="match status" value="1"/>
</dbReference>
<dbReference type="PANTHER" id="PTHR23342:SF0">
    <property type="entry name" value="N-ACETYLGLUTAMATE SYNTHASE, MITOCHONDRIAL"/>
    <property type="match status" value="1"/>
</dbReference>
<dbReference type="Pfam" id="PF00696">
    <property type="entry name" value="AA_kinase"/>
    <property type="match status" value="1"/>
</dbReference>
<dbReference type="PIRSF" id="PIRSF000728">
    <property type="entry name" value="NAGK"/>
    <property type="match status" value="1"/>
</dbReference>
<dbReference type="SUPFAM" id="SSF53633">
    <property type="entry name" value="Carbamate kinase-like"/>
    <property type="match status" value="1"/>
</dbReference>
<sequence>MKDVNILVEALPYIKKFHEKKILIKYGGHAMIDEDAMSSTVRDTVLLKYVGMEPLIVHGGGPEISRSMDKLGKEPKFIKGLRVTDEETMEIIEMVLVGKISTDIVSQISYHDGKGISLSGKDSRLIFAHKKPVSKVTSESGGEEEIDLGLVGEIDCINTDLLEMFLKNNYIPVISPVGIADDGSSLNLNADTAAGEIASSVDAEKLIILTDVPGVLRDPNDPDSLIQRIKIDEVPDLIEEGVISGGMIPKIETCVKAIEDGVKSCHIIDGRKKHSLLLEIFTKNGIGTMIYK</sequence>
<comment type="function">
    <text evidence="1">Catalyzes the ATP-dependent phosphorylation of N-acetyl-L-glutamate.</text>
</comment>
<comment type="catalytic activity">
    <reaction evidence="1">
        <text>N-acetyl-L-glutamate + ATP = N-acetyl-L-glutamyl 5-phosphate + ADP</text>
        <dbReference type="Rhea" id="RHEA:14629"/>
        <dbReference type="ChEBI" id="CHEBI:30616"/>
        <dbReference type="ChEBI" id="CHEBI:44337"/>
        <dbReference type="ChEBI" id="CHEBI:57936"/>
        <dbReference type="ChEBI" id="CHEBI:456216"/>
        <dbReference type="EC" id="2.7.2.8"/>
    </reaction>
</comment>
<comment type="pathway">
    <text evidence="1">Amino-acid biosynthesis; L-arginine biosynthesis; N(2)-acetyl-L-ornithine from L-glutamate: step 2/4.</text>
</comment>
<comment type="subcellular location">
    <subcellularLocation>
        <location evidence="1">Cytoplasm</location>
    </subcellularLocation>
</comment>
<comment type="similarity">
    <text evidence="1">Belongs to the acetylglutamate kinase family. ArgB subfamily.</text>
</comment>
<keyword id="KW-0028">Amino-acid biosynthesis</keyword>
<keyword id="KW-0055">Arginine biosynthesis</keyword>
<keyword id="KW-0067">ATP-binding</keyword>
<keyword id="KW-0963">Cytoplasm</keyword>
<keyword id="KW-0418">Kinase</keyword>
<keyword id="KW-0547">Nucleotide-binding</keyword>
<keyword id="KW-0808">Transferase</keyword>
<protein>
    <recommendedName>
        <fullName evidence="1">Acetylglutamate kinase</fullName>
        <ecNumber evidence="1">2.7.2.8</ecNumber>
    </recommendedName>
    <alternativeName>
        <fullName evidence="1">N-acetyl-L-glutamate 5-phosphotransferase</fullName>
    </alternativeName>
    <alternativeName>
        <fullName evidence="1">NAG kinase</fullName>
        <shortName evidence="1">NAGK</shortName>
    </alternativeName>
</protein>
<evidence type="ECO:0000255" key="1">
    <source>
        <dbReference type="HAMAP-Rule" id="MF_00082"/>
    </source>
</evidence>
<organism>
    <name type="scientific">Methanobrevibacter smithii (strain ATCC 35061 / DSM 861 / OCM 144 / PS)</name>
    <dbReference type="NCBI Taxonomy" id="420247"/>
    <lineage>
        <taxon>Archaea</taxon>
        <taxon>Methanobacteriati</taxon>
        <taxon>Methanobacteriota</taxon>
        <taxon>Methanomada group</taxon>
        <taxon>Methanobacteria</taxon>
        <taxon>Methanobacteriales</taxon>
        <taxon>Methanobacteriaceae</taxon>
        <taxon>Methanobrevibacter</taxon>
    </lineage>
</organism>